<protein>
    <recommendedName>
        <fullName evidence="1">Ribosome-binding factor A</fullName>
    </recommendedName>
</protein>
<comment type="function">
    <text evidence="1">One of several proteins that assist in the late maturation steps of the functional core of the 30S ribosomal subunit. Associates with free 30S ribosomal subunits (but not with 30S subunits that are part of 70S ribosomes or polysomes). Required for efficient processing of 16S rRNA. May interact with the 5'-terminal helix region of 16S rRNA.</text>
</comment>
<comment type="subunit">
    <text evidence="1">Monomer. Binds 30S ribosomal subunits, but not 50S ribosomal subunits or 70S ribosomes.</text>
</comment>
<comment type="subcellular location">
    <subcellularLocation>
        <location evidence="1">Cytoplasm</location>
    </subcellularLocation>
</comment>
<comment type="similarity">
    <text evidence="1">Belongs to the RbfA family.</text>
</comment>
<dbReference type="EMBL" id="CU468230">
    <property type="protein sequence ID" value="CAP02457.1"/>
    <property type="molecule type" value="Genomic_DNA"/>
</dbReference>
<dbReference type="SMR" id="B0VLU1"/>
<dbReference type="KEGG" id="abm:ABSDF3179"/>
<dbReference type="HOGENOM" id="CLU_089475_5_0_6"/>
<dbReference type="Proteomes" id="UP000001741">
    <property type="component" value="Chromosome"/>
</dbReference>
<dbReference type="GO" id="GO:0005829">
    <property type="term" value="C:cytosol"/>
    <property type="evidence" value="ECO:0007669"/>
    <property type="project" value="TreeGrafter"/>
</dbReference>
<dbReference type="GO" id="GO:0043024">
    <property type="term" value="F:ribosomal small subunit binding"/>
    <property type="evidence" value="ECO:0007669"/>
    <property type="project" value="TreeGrafter"/>
</dbReference>
<dbReference type="GO" id="GO:0030490">
    <property type="term" value="P:maturation of SSU-rRNA"/>
    <property type="evidence" value="ECO:0007669"/>
    <property type="project" value="UniProtKB-UniRule"/>
</dbReference>
<dbReference type="Gene3D" id="3.30.300.20">
    <property type="match status" value="1"/>
</dbReference>
<dbReference type="HAMAP" id="MF_00003">
    <property type="entry name" value="RbfA"/>
    <property type="match status" value="1"/>
</dbReference>
<dbReference type="InterPro" id="IPR015946">
    <property type="entry name" value="KH_dom-like_a/b"/>
</dbReference>
<dbReference type="InterPro" id="IPR000238">
    <property type="entry name" value="RbfA"/>
</dbReference>
<dbReference type="InterPro" id="IPR023799">
    <property type="entry name" value="RbfA_dom_sf"/>
</dbReference>
<dbReference type="NCBIfam" id="NF010389">
    <property type="entry name" value="PRK13816.1"/>
    <property type="match status" value="1"/>
</dbReference>
<dbReference type="NCBIfam" id="TIGR00082">
    <property type="entry name" value="rbfA"/>
    <property type="match status" value="1"/>
</dbReference>
<dbReference type="PANTHER" id="PTHR33515">
    <property type="entry name" value="RIBOSOME-BINDING FACTOR A, CHLOROPLASTIC-RELATED"/>
    <property type="match status" value="1"/>
</dbReference>
<dbReference type="PANTHER" id="PTHR33515:SF1">
    <property type="entry name" value="RIBOSOME-BINDING FACTOR A, CHLOROPLASTIC-RELATED"/>
    <property type="match status" value="1"/>
</dbReference>
<dbReference type="Pfam" id="PF02033">
    <property type="entry name" value="RBFA"/>
    <property type="match status" value="1"/>
</dbReference>
<dbReference type="SUPFAM" id="SSF89919">
    <property type="entry name" value="Ribosome-binding factor A, RbfA"/>
    <property type="match status" value="1"/>
</dbReference>
<proteinExistence type="inferred from homology"/>
<evidence type="ECO:0000255" key="1">
    <source>
        <dbReference type="HAMAP-Rule" id="MF_00003"/>
    </source>
</evidence>
<feature type="chain" id="PRO_1000088849" description="Ribosome-binding factor A">
    <location>
        <begin position="1"/>
        <end position="133"/>
    </location>
</feature>
<reference key="1">
    <citation type="journal article" date="2008" name="PLoS ONE">
        <title>Comparative analysis of Acinetobacters: three genomes for three lifestyles.</title>
        <authorList>
            <person name="Vallenet D."/>
            <person name="Nordmann P."/>
            <person name="Barbe V."/>
            <person name="Poirel L."/>
            <person name="Mangenot S."/>
            <person name="Bataille E."/>
            <person name="Dossat C."/>
            <person name="Gas S."/>
            <person name="Kreimeyer A."/>
            <person name="Lenoble P."/>
            <person name="Oztas S."/>
            <person name="Poulain J."/>
            <person name="Segurens B."/>
            <person name="Robert C."/>
            <person name="Abergel C."/>
            <person name="Claverie J.-M."/>
            <person name="Raoult D."/>
            <person name="Medigue C."/>
            <person name="Weissenbach J."/>
            <person name="Cruveiller S."/>
        </authorList>
    </citation>
    <scope>NUCLEOTIDE SEQUENCE [LARGE SCALE GENOMIC DNA]</scope>
    <source>
        <strain>SDF</strain>
    </source>
</reference>
<gene>
    <name evidence="1" type="primary">rbfA</name>
    <name type="ordered locus">ABSDF3179</name>
</gene>
<keyword id="KW-0963">Cytoplasm</keyword>
<keyword id="KW-0690">Ribosome biogenesis</keyword>
<accession>B0VLU1</accession>
<organism>
    <name type="scientific">Acinetobacter baumannii (strain SDF)</name>
    <dbReference type="NCBI Taxonomy" id="509170"/>
    <lineage>
        <taxon>Bacteria</taxon>
        <taxon>Pseudomonadati</taxon>
        <taxon>Pseudomonadota</taxon>
        <taxon>Gammaproteobacteria</taxon>
        <taxon>Moraxellales</taxon>
        <taxon>Moraxellaceae</taxon>
        <taxon>Acinetobacter</taxon>
        <taxon>Acinetobacter calcoaceticus/baumannii complex</taxon>
    </lineage>
</organism>
<name>RBFA_ACIBS</name>
<sequence>MAGGQRLKRMADSVQRELSELIRQELKDPRLGGLVTISGVKVSPDLGYADVYVTVMGRELSDDQNEVAHRETLDILNKASGFLRQELSRRIKTRITPRLRFHYDKTNAYGNYMFGLIEKAVQDLPKRESDDEE</sequence>